<sequence>MKNRDVIVKAGSRVLKSTPRKLNLVAGLVRNKKVSFATVQLRFCEKKAAGLIRKVLNSAIANAQNYGLDIDNLYIKEILIGKSLTLRRVCPKAMGRANRVSKRYSNITVKLGEII</sequence>
<proteinExistence type="inferred from homology"/>
<keyword id="KW-0687">Ribonucleoprotein</keyword>
<keyword id="KW-0689">Ribosomal protein</keyword>
<keyword id="KW-0694">RNA-binding</keyword>
<keyword id="KW-0699">rRNA-binding</keyword>
<organism>
    <name type="scientific">Wolbachia sp. subsp. Drosophila simulans (strain wRi)</name>
    <dbReference type="NCBI Taxonomy" id="66084"/>
    <lineage>
        <taxon>Bacteria</taxon>
        <taxon>Pseudomonadati</taxon>
        <taxon>Pseudomonadota</taxon>
        <taxon>Alphaproteobacteria</taxon>
        <taxon>Rickettsiales</taxon>
        <taxon>Anaplasmataceae</taxon>
        <taxon>Wolbachieae</taxon>
        <taxon>Wolbachia</taxon>
    </lineage>
</organism>
<protein>
    <recommendedName>
        <fullName evidence="1">Large ribosomal subunit protein uL22</fullName>
    </recommendedName>
    <alternativeName>
        <fullName evidence="2">50S ribosomal protein L22</fullName>
    </alternativeName>
</protein>
<reference key="1">
    <citation type="journal article" date="2009" name="Proc. Natl. Acad. Sci. U.S.A.">
        <title>The mosaic genome structure of the Wolbachia wRi strain infecting Drosophila simulans.</title>
        <authorList>
            <person name="Klasson L."/>
            <person name="Westberg J."/>
            <person name="Sapountzis P."/>
            <person name="Naeslund K."/>
            <person name="Lutnaes Y."/>
            <person name="Darby A.C."/>
            <person name="Veneti Z."/>
            <person name="Chen L."/>
            <person name="Braig H.R."/>
            <person name="Garrett R."/>
            <person name="Bourtzis K."/>
            <person name="Andersson S.G."/>
        </authorList>
    </citation>
    <scope>NUCLEOTIDE SEQUENCE [LARGE SCALE GENOMIC DNA]</scope>
    <source>
        <strain>wRi</strain>
    </source>
</reference>
<dbReference type="EMBL" id="CP001391">
    <property type="protein sequence ID" value="ACN95296.1"/>
    <property type="molecule type" value="Genomic_DNA"/>
</dbReference>
<dbReference type="RefSeq" id="WP_007549821.1">
    <property type="nucleotide sequence ID" value="NZ_MKIF01000201.1"/>
</dbReference>
<dbReference type="SMR" id="C0R304"/>
<dbReference type="STRING" id="66084.WRi_005140"/>
<dbReference type="GeneID" id="70036159"/>
<dbReference type="KEGG" id="wri:WRi_005140"/>
<dbReference type="HOGENOM" id="CLU_083987_3_0_5"/>
<dbReference type="Proteomes" id="UP000001293">
    <property type="component" value="Chromosome"/>
</dbReference>
<dbReference type="GO" id="GO:0022625">
    <property type="term" value="C:cytosolic large ribosomal subunit"/>
    <property type="evidence" value="ECO:0007669"/>
    <property type="project" value="TreeGrafter"/>
</dbReference>
<dbReference type="GO" id="GO:0019843">
    <property type="term" value="F:rRNA binding"/>
    <property type="evidence" value="ECO:0007669"/>
    <property type="project" value="UniProtKB-UniRule"/>
</dbReference>
<dbReference type="GO" id="GO:0003735">
    <property type="term" value="F:structural constituent of ribosome"/>
    <property type="evidence" value="ECO:0007669"/>
    <property type="project" value="InterPro"/>
</dbReference>
<dbReference type="GO" id="GO:0006412">
    <property type="term" value="P:translation"/>
    <property type="evidence" value="ECO:0007669"/>
    <property type="project" value="UniProtKB-UniRule"/>
</dbReference>
<dbReference type="CDD" id="cd00336">
    <property type="entry name" value="Ribosomal_L22"/>
    <property type="match status" value="1"/>
</dbReference>
<dbReference type="Gene3D" id="3.90.470.10">
    <property type="entry name" value="Ribosomal protein L22/L17"/>
    <property type="match status" value="1"/>
</dbReference>
<dbReference type="HAMAP" id="MF_01331_B">
    <property type="entry name" value="Ribosomal_uL22_B"/>
    <property type="match status" value="1"/>
</dbReference>
<dbReference type="InterPro" id="IPR001063">
    <property type="entry name" value="Ribosomal_uL22"/>
</dbReference>
<dbReference type="InterPro" id="IPR005727">
    <property type="entry name" value="Ribosomal_uL22_bac/chlpt-type"/>
</dbReference>
<dbReference type="InterPro" id="IPR047867">
    <property type="entry name" value="Ribosomal_uL22_bac/org-type"/>
</dbReference>
<dbReference type="InterPro" id="IPR036394">
    <property type="entry name" value="Ribosomal_uL22_sf"/>
</dbReference>
<dbReference type="NCBIfam" id="TIGR01044">
    <property type="entry name" value="rplV_bact"/>
    <property type="match status" value="1"/>
</dbReference>
<dbReference type="PANTHER" id="PTHR13501">
    <property type="entry name" value="CHLOROPLAST 50S RIBOSOMAL PROTEIN L22-RELATED"/>
    <property type="match status" value="1"/>
</dbReference>
<dbReference type="PANTHER" id="PTHR13501:SF8">
    <property type="entry name" value="LARGE RIBOSOMAL SUBUNIT PROTEIN UL22M"/>
    <property type="match status" value="1"/>
</dbReference>
<dbReference type="Pfam" id="PF00237">
    <property type="entry name" value="Ribosomal_L22"/>
    <property type="match status" value="1"/>
</dbReference>
<dbReference type="SUPFAM" id="SSF54843">
    <property type="entry name" value="Ribosomal protein L22"/>
    <property type="match status" value="1"/>
</dbReference>
<comment type="function">
    <text evidence="1">This protein binds specifically to 23S rRNA; its binding is stimulated by other ribosomal proteins, e.g. L4, L17, and L20. It is important during the early stages of 50S assembly. It makes multiple contacts with different domains of the 23S rRNA in the assembled 50S subunit and ribosome (By similarity).</text>
</comment>
<comment type="function">
    <text evidence="1">The globular domain of the protein is located near the polypeptide exit tunnel on the outside of the subunit, while an extended beta-hairpin is found that lines the wall of the exit tunnel in the center of the 70S ribosome.</text>
</comment>
<comment type="subunit">
    <text evidence="1">Part of the 50S ribosomal subunit.</text>
</comment>
<comment type="similarity">
    <text evidence="1">Belongs to the universal ribosomal protein uL22 family.</text>
</comment>
<accession>C0R304</accession>
<evidence type="ECO:0000255" key="1">
    <source>
        <dbReference type="HAMAP-Rule" id="MF_01331"/>
    </source>
</evidence>
<evidence type="ECO:0000305" key="2"/>
<feature type="chain" id="PRO_1000166094" description="Large ribosomal subunit protein uL22">
    <location>
        <begin position="1"/>
        <end position="115"/>
    </location>
</feature>
<name>RL22_WOLWR</name>
<gene>
    <name evidence="1" type="primary">rplV</name>
    <name type="ordered locus">WRi_005140</name>
</gene>